<sequence length="301" mass="33511">MASRYVAVGMMLSQTVVGVLGSFSLLLHYLSLHYIGCRLRSADLIVKHLIAASFLTLLCKGVPQTMAAFRVRYFLNAIGCKLVFYLHRVGRGVSTGTTCLLSVFQVITVSSRKSRWAKLKEKAPKHVGFSVLLCWILCMLVNIIFPIYVTGKRNHTNITVNKDLGDCCGRGNNKIAQTLRAMLLSFPDVLCLGFMLWASSSMVCILHRHKQRVQHIHRSNLSPRASPENRATQSILIPVSTFVSSYTLSCLLQVCMALLDNPNSLLVNTSALMSACFPTLSPFVLMSCDPSVYRLCFAWKR</sequence>
<reference key="1">
    <citation type="journal article" date="2003" name="Proc. Natl. Acad. Sci. U.S.A.">
        <title>Evolutionary deterioration of the vomeronasal pheromone transduction pathway in catarrhine primates.</title>
        <authorList>
            <person name="Zhang J."/>
            <person name="Webb D.M."/>
        </authorList>
    </citation>
    <scope>NUCLEOTIDE SEQUENCE [GENOMIC DNA]</scope>
</reference>
<proteinExistence type="inferred from homology"/>
<keyword id="KW-1003">Cell membrane</keyword>
<keyword id="KW-0297">G-protein coupled receptor</keyword>
<keyword id="KW-0325">Glycoprotein</keyword>
<keyword id="KW-0472">Membrane</keyword>
<keyword id="KW-0589">Pheromone response</keyword>
<keyword id="KW-0675">Receptor</keyword>
<keyword id="KW-0807">Transducer</keyword>
<keyword id="KW-0812">Transmembrane</keyword>
<keyword id="KW-1133">Transmembrane helix</keyword>
<protein>
    <recommendedName>
        <fullName>Vomeronasal type-1 receptor 4</fullName>
    </recommendedName>
    <alternativeName>
        <fullName>V1r-like receptor 4</fullName>
    </alternativeName>
</protein>
<feature type="chain" id="PRO_0000070218" description="Vomeronasal type-1 receptor 4">
    <location>
        <begin position="1"/>
        <end position="301"/>
    </location>
</feature>
<feature type="topological domain" description="Extracellular" evidence="1">
    <location>
        <begin position="1"/>
        <end position="15"/>
    </location>
</feature>
<feature type="transmembrane region" description="Helical; Name=1" evidence="1">
    <location>
        <begin position="16"/>
        <end position="36"/>
    </location>
</feature>
<feature type="topological domain" description="Cytoplasmic" evidence="1">
    <location>
        <begin position="37"/>
        <end position="48"/>
    </location>
</feature>
<feature type="transmembrane region" description="Helical; Name=2" evidence="1">
    <location>
        <begin position="49"/>
        <end position="69"/>
    </location>
</feature>
<feature type="topological domain" description="Extracellular" evidence="1">
    <location>
        <begin position="70"/>
        <end position="88"/>
    </location>
</feature>
<feature type="transmembrane region" description="Helical; Name=3" evidence="1">
    <location>
        <begin position="89"/>
        <end position="107"/>
    </location>
</feature>
<feature type="topological domain" description="Cytoplasmic" evidence="1">
    <location>
        <begin position="108"/>
        <end position="126"/>
    </location>
</feature>
<feature type="transmembrane region" description="Helical; Name=4" evidence="1">
    <location>
        <begin position="127"/>
        <end position="147"/>
    </location>
</feature>
<feature type="topological domain" description="Extracellular" evidence="1">
    <location>
        <begin position="148"/>
        <end position="185"/>
    </location>
</feature>
<feature type="transmembrane region" description="Helical; Name=5" evidence="1">
    <location>
        <begin position="186"/>
        <end position="206"/>
    </location>
</feature>
<feature type="topological domain" description="Cytoplasmic" evidence="1">
    <location>
        <begin position="207"/>
        <end position="234"/>
    </location>
</feature>
<feature type="transmembrane region" description="Helical; Name=6" evidence="1">
    <location>
        <begin position="235"/>
        <end position="255"/>
    </location>
</feature>
<feature type="topological domain" description="Extracellular" evidence="1">
    <location>
        <begin position="256"/>
        <end position="264"/>
    </location>
</feature>
<feature type="transmembrane region" description="Helical; Name=7" evidence="1">
    <location>
        <begin position="265"/>
        <end position="285"/>
    </location>
</feature>
<feature type="topological domain" description="Cytoplasmic" evidence="1">
    <location>
        <begin position="286"/>
        <end position="301"/>
    </location>
</feature>
<feature type="glycosylation site" description="N-linked (GlcNAc...) asparagine" evidence="1">
    <location>
        <position position="154"/>
    </location>
</feature>
<feature type="glycosylation site" description="N-linked (GlcNAc...) asparagine" evidence="1">
    <location>
        <position position="157"/>
    </location>
</feature>
<gene>
    <name type="primary">VN1R4</name>
    <name type="synonym">V1RL4</name>
</gene>
<dbReference type="EMBL" id="AY312473">
    <property type="protein sequence ID" value="AAP85610.1"/>
    <property type="molecule type" value="Genomic_DNA"/>
</dbReference>
<dbReference type="SMR" id="Q7YRP2"/>
<dbReference type="GlyCosmos" id="Q7YRP2">
    <property type="glycosylation" value="2 sites, No reported glycans"/>
</dbReference>
<dbReference type="GO" id="GO:0005886">
    <property type="term" value="C:plasma membrane"/>
    <property type="evidence" value="ECO:0007669"/>
    <property type="project" value="UniProtKB-SubCell"/>
</dbReference>
<dbReference type="GO" id="GO:0016503">
    <property type="term" value="F:pheromone receptor activity"/>
    <property type="evidence" value="ECO:0007669"/>
    <property type="project" value="InterPro"/>
</dbReference>
<dbReference type="GO" id="GO:0019236">
    <property type="term" value="P:response to pheromone"/>
    <property type="evidence" value="ECO:0007669"/>
    <property type="project" value="UniProtKB-KW"/>
</dbReference>
<dbReference type="GO" id="GO:0007606">
    <property type="term" value="P:sensory perception of chemical stimulus"/>
    <property type="evidence" value="ECO:0007669"/>
    <property type="project" value="UniProtKB-ARBA"/>
</dbReference>
<dbReference type="CDD" id="cd13949">
    <property type="entry name" value="7tm_V1R_pheromone"/>
    <property type="match status" value="1"/>
</dbReference>
<dbReference type="FunFam" id="1.20.1070.10:FF:000033">
    <property type="entry name" value="Vomeronasal type-1 receptor"/>
    <property type="match status" value="1"/>
</dbReference>
<dbReference type="Gene3D" id="1.20.1070.10">
    <property type="entry name" value="Rhodopsin 7-helix transmembrane proteins"/>
    <property type="match status" value="1"/>
</dbReference>
<dbReference type="InterPro" id="IPR017452">
    <property type="entry name" value="GPCR_Rhodpsn_7TM"/>
</dbReference>
<dbReference type="InterPro" id="IPR004072">
    <property type="entry name" value="Vmron_rcpt_1"/>
</dbReference>
<dbReference type="PANTHER" id="PTHR24062">
    <property type="entry name" value="VOMERONASAL TYPE-1 RECEPTOR"/>
    <property type="match status" value="1"/>
</dbReference>
<dbReference type="Pfam" id="PF03402">
    <property type="entry name" value="V1R"/>
    <property type="match status" value="1"/>
</dbReference>
<dbReference type="PRINTS" id="PR01534">
    <property type="entry name" value="VOMERONASL1R"/>
</dbReference>
<dbReference type="SUPFAM" id="SSF81321">
    <property type="entry name" value="Family A G protein-coupled receptor-like"/>
    <property type="match status" value="1"/>
</dbReference>
<dbReference type="PROSITE" id="PS50262">
    <property type="entry name" value="G_PROTEIN_RECEP_F1_2"/>
    <property type="match status" value="1"/>
</dbReference>
<name>VN1R4_PONPY</name>
<organism>
    <name type="scientific">Pongo pygmaeus</name>
    <name type="common">Bornean orangutan</name>
    <dbReference type="NCBI Taxonomy" id="9600"/>
    <lineage>
        <taxon>Eukaryota</taxon>
        <taxon>Metazoa</taxon>
        <taxon>Chordata</taxon>
        <taxon>Craniata</taxon>
        <taxon>Vertebrata</taxon>
        <taxon>Euteleostomi</taxon>
        <taxon>Mammalia</taxon>
        <taxon>Eutheria</taxon>
        <taxon>Euarchontoglires</taxon>
        <taxon>Primates</taxon>
        <taxon>Haplorrhini</taxon>
        <taxon>Catarrhini</taxon>
        <taxon>Hominidae</taxon>
        <taxon>Pongo</taxon>
    </lineage>
</organism>
<accession>Q7YRP2</accession>
<evidence type="ECO:0000255" key="1"/>
<evidence type="ECO:0000255" key="2">
    <source>
        <dbReference type="PROSITE-ProRule" id="PRU00521"/>
    </source>
</evidence>
<comment type="function">
    <text>Putative pheromone receptor.</text>
</comment>
<comment type="subcellular location">
    <subcellularLocation>
        <location>Cell membrane</location>
        <topology>Multi-pass membrane protein</topology>
    </subcellularLocation>
</comment>
<comment type="similarity">
    <text evidence="2">Belongs to the G-protein coupled receptor 1 family.</text>
</comment>